<organism>
    <name type="scientific">Candida glabrata (strain ATCC 2001 / BCRC 20586 / JCM 3761 / NBRC 0622 / NRRL Y-65 / CBS 138)</name>
    <name type="common">Yeast</name>
    <name type="synonym">Nakaseomyces glabratus</name>
    <dbReference type="NCBI Taxonomy" id="284593"/>
    <lineage>
        <taxon>Eukaryota</taxon>
        <taxon>Fungi</taxon>
        <taxon>Dikarya</taxon>
        <taxon>Ascomycota</taxon>
        <taxon>Saccharomycotina</taxon>
        <taxon>Saccharomycetes</taxon>
        <taxon>Saccharomycetales</taxon>
        <taxon>Saccharomycetaceae</taxon>
        <taxon>Nakaseomyces</taxon>
    </lineage>
</organism>
<comment type="function">
    <text>Mitochondrial membrane ATP synthase (F(1)F(0) ATP synthase or Complex V) produces ATP from ADP in the presence of a proton gradient across the membrane which is generated by electron transport complexes of the respiratory chain. F-type ATPases consist of two structural domains, F(1) - containing the extramembraneous catalytic core and F(0) - containing the membrane proton channel, linked together by a central stalk and a peripheral stalk. During catalysis, ATP synthesis in the catalytic domain of F(1) is coupled via a rotary mechanism of the central stalk subunits to proton translocation. Part of the complex F(0) domain. A homomeric c-ring of probably 10 subunits is part of the complex rotary element.</text>
</comment>
<comment type="subunit">
    <text>F-type ATPases have 2 components, CF(1) - the catalytic core - and CF(0) - the membrane proton channel. CF(1) has five subunits: alpha(3), beta(3), gamma(1), delta(1), epsilon(1). CF(0) has three main subunits: a, b and c.</text>
</comment>
<comment type="subcellular location">
    <subcellularLocation>
        <location evidence="3">Mitochondrion membrane</location>
        <topology evidence="3">Multi-pass membrane protein</topology>
    </subcellularLocation>
</comment>
<comment type="similarity">
    <text evidence="3">Belongs to the ATPase C chain family.</text>
</comment>
<feature type="chain" id="PRO_0000112231" description="ATP synthase subunit 9, mitochondrial">
    <location>
        <begin position="1"/>
        <end position="76"/>
    </location>
</feature>
<feature type="transmembrane region" description="Helical" evidence="2">
    <location>
        <begin position="14"/>
        <end position="34"/>
    </location>
</feature>
<feature type="transmembrane region" description="Helical" evidence="2">
    <location>
        <begin position="56"/>
        <end position="76"/>
    </location>
</feature>
<feature type="site" description="Reversibly protonated during proton transport" evidence="1">
    <location>
        <position position="59"/>
    </location>
</feature>
<reference key="1">
    <citation type="journal article" date="2003" name="FEBS Lett.">
        <title>The complete mitochondrial genome sequence of the pathogenic yeast Candida (Torulopsis) glabrata.</title>
        <authorList>
            <person name="Koszul R."/>
            <person name="Malpertuy A."/>
            <person name="Frangeul L."/>
            <person name="Bouchier C."/>
            <person name="Wincker P."/>
            <person name="Thierry A."/>
            <person name="Duthoy S."/>
            <person name="Ferris S."/>
            <person name="Hennequin C."/>
            <person name="Dujon B."/>
        </authorList>
    </citation>
    <scope>NUCLEOTIDE SEQUENCE [LARGE SCALE GENOMIC DNA]</scope>
    <source>
        <strain>ATCC 2001 / BCRC 20586 / JCM 3761 / NBRC 0622 / NRRL Y-65 / CBS 138</strain>
    </source>
</reference>
<proteinExistence type="inferred from homology"/>
<dbReference type="EMBL" id="AJ511533">
    <property type="protein sequence ID" value="CAD54425.1"/>
    <property type="molecule type" value="Genomic_DNA"/>
</dbReference>
<dbReference type="RefSeq" id="NP_818784.1">
    <property type="nucleotide sequence ID" value="NC_004691.1"/>
</dbReference>
<dbReference type="SMR" id="Q85Q98"/>
<dbReference type="FunCoup" id="Q85Q98">
    <property type="interactions" value="918"/>
</dbReference>
<dbReference type="STRING" id="284593.Q85Q98"/>
<dbReference type="EnsemblFungi" id="CaglfMp10-T">
    <property type="protein sequence ID" value="CaglfMp10-T-p1"/>
    <property type="gene ID" value="CaglfMp10"/>
</dbReference>
<dbReference type="GeneID" id="807026"/>
<dbReference type="KEGG" id="cgr:807026"/>
<dbReference type="CGD" id="CAL0139490">
    <property type="gene designation" value="ATP9"/>
</dbReference>
<dbReference type="VEuPathDB" id="FungiDB:B1J91_Mp10"/>
<dbReference type="VEuPathDB" id="FungiDB:CaglfMp10"/>
<dbReference type="InParanoid" id="Q85Q98"/>
<dbReference type="GO" id="GO:0005743">
    <property type="term" value="C:mitochondrial inner membrane"/>
    <property type="evidence" value="ECO:0007669"/>
    <property type="project" value="EnsemblFungi"/>
</dbReference>
<dbReference type="GO" id="GO:0045259">
    <property type="term" value="C:proton-transporting ATP synthase complex"/>
    <property type="evidence" value="ECO:0000266"/>
    <property type="project" value="CGD"/>
</dbReference>
<dbReference type="GO" id="GO:0033177">
    <property type="term" value="C:proton-transporting two-sector ATPase complex, proton-transporting domain"/>
    <property type="evidence" value="ECO:0007669"/>
    <property type="project" value="InterPro"/>
</dbReference>
<dbReference type="GO" id="GO:0016887">
    <property type="term" value="F:ATP hydrolysis activity"/>
    <property type="evidence" value="ECO:0007669"/>
    <property type="project" value="EnsemblFungi"/>
</dbReference>
<dbReference type="GO" id="GO:0042802">
    <property type="term" value="F:identical protein binding"/>
    <property type="evidence" value="ECO:0007669"/>
    <property type="project" value="EnsemblFungi"/>
</dbReference>
<dbReference type="GO" id="GO:0008289">
    <property type="term" value="F:lipid binding"/>
    <property type="evidence" value="ECO:0007669"/>
    <property type="project" value="UniProtKB-KW"/>
</dbReference>
<dbReference type="GO" id="GO:0046933">
    <property type="term" value="F:proton-transporting ATP synthase activity, rotational mechanism"/>
    <property type="evidence" value="ECO:0007669"/>
    <property type="project" value="EnsemblFungi"/>
</dbReference>
<dbReference type="GO" id="GO:0015986">
    <property type="term" value="P:proton motive force-driven ATP synthesis"/>
    <property type="evidence" value="ECO:0000266"/>
    <property type="project" value="CGD"/>
</dbReference>
<dbReference type="CDD" id="cd18182">
    <property type="entry name" value="ATP-synt_Fo_c_ATP5G3"/>
    <property type="match status" value="1"/>
</dbReference>
<dbReference type="FunFam" id="1.20.20.10:FF:000003">
    <property type="entry name" value="Atp synthase f complex subunit mitochondrial"/>
    <property type="match status" value="1"/>
</dbReference>
<dbReference type="Gene3D" id="1.20.20.10">
    <property type="entry name" value="F1F0 ATP synthase subunit C"/>
    <property type="match status" value="1"/>
</dbReference>
<dbReference type="HAMAP" id="MF_01396">
    <property type="entry name" value="ATP_synth_c_bact"/>
    <property type="match status" value="1"/>
</dbReference>
<dbReference type="InterPro" id="IPR000454">
    <property type="entry name" value="ATP_synth_F0_csu"/>
</dbReference>
<dbReference type="InterPro" id="IPR020537">
    <property type="entry name" value="ATP_synth_F0_csu_DDCD_BS"/>
</dbReference>
<dbReference type="InterPro" id="IPR038662">
    <property type="entry name" value="ATP_synth_F0_csu_sf"/>
</dbReference>
<dbReference type="InterPro" id="IPR002379">
    <property type="entry name" value="ATPase_proteolipid_c-like_dom"/>
</dbReference>
<dbReference type="InterPro" id="IPR035921">
    <property type="entry name" value="F/V-ATP_Csub_sf"/>
</dbReference>
<dbReference type="PANTHER" id="PTHR10031">
    <property type="entry name" value="ATP SYNTHASE LIPID-BINDING PROTEIN, MITOCHONDRIAL"/>
    <property type="match status" value="1"/>
</dbReference>
<dbReference type="PANTHER" id="PTHR10031:SF0">
    <property type="entry name" value="ATPASE PROTEIN 9"/>
    <property type="match status" value="1"/>
</dbReference>
<dbReference type="Pfam" id="PF00137">
    <property type="entry name" value="ATP-synt_C"/>
    <property type="match status" value="1"/>
</dbReference>
<dbReference type="PRINTS" id="PR00124">
    <property type="entry name" value="ATPASEC"/>
</dbReference>
<dbReference type="SUPFAM" id="SSF81333">
    <property type="entry name" value="F1F0 ATP synthase subunit C"/>
    <property type="match status" value="1"/>
</dbReference>
<dbReference type="PROSITE" id="PS00605">
    <property type="entry name" value="ATPASE_C"/>
    <property type="match status" value="1"/>
</dbReference>
<accession>Q85Q98</accession>
<gene>
    <name type="primary">ATP9</name>
</gene>
<name>ATP9_CANGA</name>
<keyword id="KW-0138">CF(0)</keyword>
<keyword id="KW-0375">Hydrogen ion transport</keyword>
<keyword id="KW-0406">Ion transport</keyword>
<keyword id="KW-0446">Lipid-binding</keyword>
<keyword id="KW-0472">Membrane</keyword>
<keyword id="KW-0496">Mitochondrion</keyword>
<keyword id="KW-0812">Transmembrane</keyword>
<keyword id="KW-1133">Transmembrane helix</keyword>
<keyword id="KW-0813">Transport</keyword>
<geneLocation type="mitochondrion"/>
<evidence type="ECO:0000250" key="1"/>
<evidence type="ECO:0000255" key="2"/>
<evidence type="ECO:0000305" key="3"/>
<sequence>MQLALAAKYIGAGISTIGLIGAGIGIGIVFAALINGVSRNPSLKDTLFSYSILGMALSEATGLFCLMISFMLLFAV</sequence>
<protein>
    <recommendedName>
        <fullName>ATP synthase subunit 9, mitochondrial</fullName>
    </recommendedName>
    <alternativeName>
        <fullName>Lipid-binding protein</fullName>
    </alternativeName>
</protein>